<reference key="1">
    <citation type="journal article" date="1998" name="Nature">
        <title>Analysis of 1.9 Mb of contiguous sequence from chromosome 4 of Arabidopsis thaliana.</title>
        <authorList>
            <person name="Bevan M."/>
            <person name="Bancroft I."/>
            <person name="Bent E."/>
            <person name="Love K."/>
            <person name="Goodman H.M."/>
            <person name="Dean C."/>
            <person name="Bergkamp R."/>
            <person name="Dirkse W."/>
            <person name="van Staveren M."/>
            <person name="Stiekema W."/>
            <person name="Drost L."/>
            <person name="Ridley P."/>
            <person name="Hudson S.-A."/>
            <person name="Patel K."/>
            <person name="Murphy G."/>
            <person name="Piffanelli P."/>
            <person name="Wedler H."/>
            <person name="Wedler E."/>
            <person name="Wambutt R."/>
            <person name="Weitzenegger T."/>
            <person name="Pohl T."/>
            <person name="Terryn N."/>
            <person name="Gielen J."/>
            <person name="Villarroel R."/>
            <person name="De Clercq R."/>
            <person name="van Montagu M."/>
            <person name="Lecharny A."/>
            <person name="Aubourg S."/>
            <person name="Gy I."/>
            <person name="Kreis M."/>
            <person name="Lao N."/>
            <person name="Kavanagh T."/>
            <person name="Hempel S."/>
            <person name="Kotter P."/>
            <person name="Entian K.-D."/>
            <person name="Rieger M."/>
            <person name="Schaefer M."/>
            <person name="Funk B."/>
            <person name="Mueller-Auer S."/>
            <person name="Silvey M."/>
            <person name="James R."/>
            <person name="Monfort A."/>
            <person name="Pons A."/>
            <person name="Puigdomenech P."/>
            <person name="Douka A."/>
            <person name="Voukelatou E."/>
            <person name="Milioni D."/>
            <person name="Hatzopoulos P."/>
            <person name="Piravandi E."/>
            <person name="Obermaier B."/>
            <person name="Hilbert H."/>
            <person name="Duesterhoeft A."/>
            <person name="Moores T."/>
            <person name="Jones J.D.G."/>
            <person name="Eneva T."/>
            <person name="Palme K."/>
            <person name="Benes V."/>
            <person name="Rechmann S."/>
            <person name="Ansorge W."/>
            <person name="Cooke R."/>
            <person name="Berger C."/>
            <person name="Delseny M."/>
            <person name="Voet M."/>
            <person name="Volckaert G."/>
            <person name="Mewes H.-W."/>
            <person name="Klosterman S."/>
            <person name="Schueller C."/>
            <person name="Chalwatzis N."/>
        </authorList>
    </citation>
    <scope>NUCLEOTIDE SEQUENCE [LARGE SCALE GENOMIC DNA]</scope>
    <source>
        <strain>cv. Columbia</strain>
    </source>
</reference>
<reference key="2">
    <citation type="journal article" date="1999" name="Nature">
        <title>Sequence and analysis of chromosome 4 of the plant Arabidopsis thaliana.</title>
        <authorList>
            <person name="Mayer K.F.X."/>
            <person name="Schueller C."/>
            <person name="Wambutt R."/>
            <person name="Murphy G."/>
            <person name="Volckaert G."/>
            <person name="Pohl T."/>
            <person name="Duesterhoeft A."/>
            <person name="Stiekema W."/>
            <person name="Entian K.-D."/>
            <person name="Terryn N."/>
            <person name="Harris B."/>
            <person name="Ansorge W."/>
            <person name="Brandt P."/>
            <person name="Grivell L.A."/>
            <person name="Rieger M."/>
            <person name="Weichselgartner M."/>
            <person name="de Simone V."/>
            <person name="Obermaier B."/>
            <person name="Mache R."/>
            <person name="Mueller M."/>
            <person name="Kreis M."/>
            <person name="Delseny M."/>
            <person name="Puigdomenech P."/>
            <person name="Watson M."/>
            <person name="Schmidtheini T."/>
            <person name="Reichert B."/>
            <person name="Portetelle D."/>
            <person name="Perez-Alonso M."/>
            <person name="Boutry M."/>
            <person name="Bancroft I."/>
            <person name="Vos P."/>
            <person name="Hoheisel J."/>
            <person name="Zimmermann W."/>
            <person name="Wedler H."/>
            <person name="Ridley P."/>
            <person name="Langham S.-A."/>
            <person name="McCullagh B."/>
            <person name="Bilham L."/>
            <person name="Robben J."/>
            <person name="van der Schueren J."/>
            <person name="Grymonprez B."/>
            <person name="Chuang Y.-J."/>
            <person name="Vandenbussche F."/>
            <person name="Braeken M."/>
            <person name="Weltjens I."/>
            <person name="Voet M."/>
            <person name="Bastiaens I."/>
            <person name="Aert R."/>
            <person name="Defoor E."/>
            <person name="Weitzenegger T."/>
            <person name="Bothe G."/>
            <person name="Ramsperger U."/>
            <person name="Hilbert H."/>
            <person name="Braun M."/>
            <person name="Holzer E."/>
            <person name="Brandt A."/>
            <person name="Peters S."/>
            <person name="van Staveren M."/>
            <person name="Dirkse W."/>
            <person name="Mooijman P."/>
            <person name="Klein Lankhorst R."/>
            <person name="Rose M."/>
            <person name="Hauf J."/>
            <person name="Koetter P."/>
            <person name="Berneiser S."/>
            <person name="Hempel S."/>
            <person name="Feldpausch M."/>
            <person name="Lamberth S."/>
            <person name="Van den Daele H."/>
            <person name="De Keyser A."/>
            <person name="Buysshaert C."/>
            <person name="Gielen J."/>
            <person name="Villarroel R."/>
            <person name="De Clercq R."/>
            <person name="van Montagu M."/>
            <person name="Rogers J."/>
            <person name="Cronin A."/>
            <person name="Quail M.A."/>
            <person name="Bray-Allen S."/>
            <person name="Clark L."/>
            <person name="Doggett J."/>
            <person name="Hall S."/>
            <person name="Kay M."/>
            <person name="Lennard N."/>
            <person name="McLay K."/>
            <person name="Mayes R."/>
            <person name="Pettett A."/>
            <person name="Rajandream M.A."/>
            <person name="Lyne M."/>
            <person name="Benes V."/>
            <person name="Rechmann S."/>
            <person name="Borkova D."/>
            <person name="Bloecker H."/>
            <person name="Scharfe M."/>
            <person name="Grimm M."/>
            <person name="Loehnert T.-H."/>
            <person name="Dose S."/>
            <person name="de Haan M."/>
            <person name="Maarse A.C."/>
            <person name="Schaefer M."/>
            <person name="Mueller-Auer S."/>
            <person name="Gabel C."/>
            <person name="Fuchs M."/>
            <person name="Fartmann B."/>
            <person name="Granderath K."/>
            <person name="Dauner D."/>
            <person name="Herzl A."/>
            <person name="Neumann S."/>
            <person name="Argiriou A."/>
            <person name="Vitale D."/>
            <person name="Liguori R."/>
            <person name="Piravandi E."/>
            <person name="Massenet O."/>
            <person name="Quigley F."/>
            <person name="Clabauld G."/>
            <person name="Muendlein A."/>
            <person name="Felber R."/>
            <person name="Schnabl S."/>
            <person name="Hiller R."/>
            <person name="Schmidt W."/>
            <person name="Lecharny A."/>
            <person name="Aubourg S."/>
            <person name="Chefdor F."/>
            <person name="Cooke R."/>
            <person name="Berger C."/>
            <person name="Monfort A."/>
            <person name="Casacuberta E."/>
            <person name="Gibbons T."/>
            <person name="Weber N."/>
            <person name="Vandenbol M."/>
            <person name="Bargues M."/>
            <person name="Terol J."/>
            <person name="Torres A."/>
            <person name="Perez-Perez A."/>
            <person name="Purnelle B."/>
            <person name="Bent E."/>
            <person name="Johnson S."/>
            <person name="Tacon D."/>
            <person name="Jesse T."/>
            <person name="Heijnen L."/>
            <person name="Schwarz S."/>
            <person name="Scholler P."/>
            <person name="Heber S."/>
            <person name="Francs P."/>
            <person name="Bielke C."/>
            <person name="Frishman D."/>
            <person name="Haase D."/>
            <person name="Lemcke K."/>
            <person name="Mewes H.-W."/>
            <person name="Stocker S."/>
            <person name="Zaccaria P."/>
            <person name="Bevan M."/>
            <person name="Wilson R.K."/>
            <person name="de la Bastide M."/>
            <person name="Habermann K."/>
            <person name="Parnell L."/>
            <person name="Dedhia N."/>
            <person name="Gnoj L."/>
            <person name="Schutz K."/>
            <person name="Huang E."/>
            <person name="Spiegel L."/>
            <person name="Sekhon M."/>
            <person name="Murray J."/>
            <person name="Sheet P."/>
            <person name="Cordes M."/>
            <person name="Abu-Threideh J."/>
            <person name="Stoneking T."/>
            <person name="Kalicki J."/>
            <person name="Graves T."/>
            <person name="Harmon G."/>
            <person name="Edwards J."/>
            <person name="Latreille P."/>
            <person name="Courtney L."/>
            <person name="Cloud J."/>
            <person name="Abbott A."/>
            <person name="Scott K."/>
            <person name="Johnson D."/>
            <person name="Minx P."/>
            <person name="Bentley D."/>
            <person name="Fulton B."/>
            <person name="Miller N."/>
            <person name="Greco T."/>
            <person name="Kemp K."/>
            <person name="Kramer J."/>
            <person name="Fulton L."/>
            <person name="Mardis E."/>
            <person name="Dante M."/>
            <person name="Pepin K."/>
            <person name="Hillier L.W."/>
            <person name="Nelson J."/>
            <person name="Spieth J."/>
            <person name="Ryan E."/>
            <person name="Andrews S."/>
            <person name="Geisel C."/>
            <person name="Layman D."/>
            <person name="Du H."/>
            <person name="Ali J."/>
            <person name="Berghoff A."/>
            <person name="Jones K."/>
            <person name="Drone K."/>
            <person name="Cotton M."/>
            <person name="Joshu C."/>
            <person name="Antonoiu B."/>
            <person name="Zidanic M."/>
            <person name="Strong C."/>
            <person name="Sun H."/>
            <person name="Lamar B."/>
            <person name="Yordan C."/>
            <person name="Ma P."/>
            <person name="Zhong J."/>
            <person name="Preston R."/>
            <person name="Vil D."/>
            <person name="Shekher M."/>
            <person name="Matero A."/>
            <person name="Shah R."/>
            <person name="Swaby I.K."/>
            <person name="O'Shaughnessy A."/>
            <person name="Rodriguez M."/>
            <person name="Hoffman J."/>
            <person name="Till S."/>
            <person name="Granat S."/>
            <person name="Shohdy N."/>
            <person name="Hasegawa A."/>
            <person name="Hameed A."/>
            <person name="Lodhi M."/>
            <person name="Johnson A."/>
            <person name="Chen E."/>
            <person name="Marra M.A."/>
            <person name="Martienssen R."/>
            <person name="McCombie W.R."/>
        </authorList>
    </citation>
    <scope>NUCLEOTIDE SEQUENCE [LARGE SCALE GENOMIC DNA]</scope>
    <source>
        <strain>cv. Columbia</strain>
    </source>
</reference>
<reference key="3">
    <citation type="journal article" date="2017" name="Plant J.">
        <title>Araport11: a complete reannotation of the Arabidopsis thaliana reference genome.</title>
        <authorList>
            <person name="Cheng C.Y."/>
            <person name="Krishnakumar V."/>
            <person name="Chan A.P."/>
            <person name="Thibaud-Nissen F."/>
            <person name="Schobel S."/>
            <person name="Town C.D."/>
        </authorList>
    </citation>
    <scope>GENOME REANNOTATION</scope>
    <source>
        <strain>cv. Columbia</strain>
    </source>
</reference>
<reference key="4">
    <citation type="journal article" date="2002" name="Plant Cell">
        <title>Redundant proteolytic mechanisms process seed storage proteins in the absence of seed-type members of the vacuolar processing enzyme family of cysteine proteases.</title>
        <authorList>
            <person name="Gruis D.F."/>
            <person name="Selinger D.A."/>
            <person name="Curran J.M."/>
            <person name="Jung R."/>
        </authorList>
    </citation>
    <scope>GENE FAMILY</scope>
</reference>
<proteinExistence type="inferred from homology"/>
<name>VCL43_ARATH</name>
<protein>
    <recommendedName>
        <fullName>Vicilin-like seed storage protein At4g36700</fullName>
    </recommendedName>
    <alternativeName>
        <fullName>Globulin At4g36700</fullName>
    </alternativeName>
</protein>
<keyword id="KW-0175">Coiled coil</keyword>
<keyword id="KW-0325">Glycoprotein</keyword>
<keyword id="KW-1185">Reference proteome</keyword>
<keyword id="KW-0732">Signal</keyword>
<dbReference type="EMBL" id="Z99708">
    <property type="protein sequence ID" value="CAB16827.1"/>
    <property type="status" value="ALT_SEQ"/>
    <property type="molecule type" value="Genomic_DNA"/>
</dbReference>
<dbReference type="EMBL" id="AL161589">
    <property type="protein sequence ID" value="CAB80336.1"/>
    <property type="status" value="ALT_SEQ"/>
    <property type="molecule type" value="Genomic_DNA"/>
</dbReference>
<dbReference type="EMBL" id="CP002687">
    <property type="protein sequence ID" value="AEE86691.1"/>
    <property type="molecule type" value="Genomic_DNA"/>
</dbReference>
<dbReference type="PIR" id="D85433">
    <property type="entry name" value="D85433"/>
</dbReference>
<dbReference type="RefSeq" id="NP_195388.2">
    <property type="nucleotide sequence ID" value="NM_119834.2"/>
</dbReference>
<dbReference type="SMR" id="F4JQG6"/>
<dbReference type="FunCoup" id="F4JQG6">
    <property type="interactions" value="131"/>
</dbReference>
<dbReference type="STRING" id="3702.F4JQG6"/>
<dbReference type="GlyGen" id="F4JQG6">
    <property type="glycosylation" value="5 sites"/>
</dbReference>
<dbReference type="PaxDb" id="3702-AT4G36700.1"/>
<dbReference type="ProMEX" id="F4JQG6"/>
<dbReference type="ProteomicsDB" id="243227"/>
<dbReference type="EnsemblPlants" id="AT4G36700.1">
    <property type="protein sequence ID" value="AT4G36700.1"/>
    <property type="gene ID" value="AT4G36700"/>
</dbReference>
<dbReference type="GeneID" id="829823"/>
<dbReference type="Gramene" id="AT4G36700.1">
    <property type="protein sequence ID" value="AT4G36700.1"/>
    <property type="gene ID" value="AT4G36700"/>
</dbReference>
<dbReference type="KEGG" id="ath:AT4G36700"/>
<dbReference type="Araport" id="AT4G36700"/>
<dbReference type="TAIR" id="AT4G36700"/>
<dbReference type="eggNOG" id="ENOG502SY9Z">
    <property type="taxonomic scope" value="Eukaryota"/>
</dbReference>
<dbReference type="HOGENOM" id="CLU_027536_1_0_1"/>
<dbReference type="InParanoid" id="F4JQG6"/>
<dbReference type="OMA" id="MIEMIRF"/>
<dbReference type="OrthoDB" id="1932894at2759"/>
<dbReference type="PRO" id="PR:F4JQG6"/>
<dbReference type="Proteomes" id="UP000006548">
    <property type="component" value="Chromosome 4"/>
</dbReference>
<dbReference type="ExpressionAtlas" id="F4JQG6">
    <property type="expression patterns" value="baseline and differential"/>
</dbReference>
<dbReference type="CDD" id="cd02245">
    <property type="entry name" value="cupin_7S_vicilin-like_C"/>
    <property type="match status" value="1"/>
</dbReference>
<dbReference type="CDD" id="cd02244">
    <property type="entry name" value="cupin_7S_vicilin-like_N"/>
    <property type="match status" value="1"/>
</dbReference>
<dbReference type="Gene3D" id="2.60.120.10">
    <property type="entry name" value="Jelly Rolls"/>
    <property type="match status" value="2"/>
</dbReference>
<dbReference type="InterPro" id="IPR006045">
    <property type="entry name" value="Cupin_1"/>
</dbReference>
<dbReference type="InterPro" id="IPR014710">
    <property type="entry name" value="RmlC-like_jellyroll"/>
</dbReference>
<dbReference type="InterPro" id="IPR011051">
    <property type="entry name" value="RmlC_Cupin_sf"/>
</dbReference>
<dbReference type="InterPro" id="IPR050253">
    <property type="entry name" value="Seed_Storage-Functional"/>
</dbReference>
<dbReference type="PANTHER" id="PTHR31189:SF33">
    <property type="entry name" value="CUPIN TYPE-1 DOMAIN-CONTAINING PROTEIN"/>
    <property type="match status" value="1"/>
</dbReference>
<dbReference type="PANTHER" id="PTHR31189">
    <property type="entry name" value="OS03G0336100 PROTEIN-RELATED"/>
    <property type="match status" value="1"/>
</dbReference>
<dbReference type="Pfam" id="PF00190">
    <property type="entry name" value="Cupin_1"/>
    <property type="match status" value="1"/>
</dbReference>
<dbReference type="SMART" id="SM00835">
    <property type="entry name" value="Cupin_1"/>
    <property type="match status" value="1"/>
</dbReference>
<dbReference type="SUPFAM" id="SSF51182">
    <property type="entry name" value="RmlC-like cupins"/>
    <property type="match status" value="1"/>
</dbReference>
<organism evidence="8">
    <name type="scientific">Arabidopsis thaliana</name>
    <name type="common">Mouse-ear cress</name>
    <dbReference type="NCBI Taxonomy" id="3702"/>
    <lineage>
        <taxon>Eukaryota</taxon>
        <taxon>Viridiplantae</taxon>
        <taxon>Streptophyta</taxon>
        <taxon>Embryophyta</taxon>
        <taxon>Tracheophyta</taxon>
        <taxon>Spermatophyta</taxon>
        <taxon>Magnoliopsida</taxon>
        <taxon>eudicotyledons</taxon>
        <taxon>Gunneridae</taxon>
        <taxon>Pentapetalae</taxon>
        <taxon>rosids</taxon>
        <taxon>malvids</taxon>
        <taxon>Brassicales</taxon>
        <taxon>Brassicaceae</taxon>
        <taxon>Camelineae</taxon>
        <taxon>Arabidopsis</taxon>
    </lineage>
</organism>
<gene>
    <name evidence="5" type="ordered locus">At4g36700</name>
    <name evidence="7" type="ORF">AP22.80</name>
    <name evidence="6" type="ORF">C7A10.660</name>
</gene>
<evidence type="ECO:0000255" key="1"/>
<evidence type="ECO:0000255" key="2">
    <source>
        <dbReference type="PROSITE-ProRule" id="PRU00498"/>
    </source>
</evidence>
<evidence type="ECO:0000256" key="3">
    <source>
        <dbReference type="SAM" id="MobiDB-lite"/>
    </source>
</evidence>
<evidence type="ECO:0000305" key="4"/>
<evidence type="ECO:0000312" key="5">
    <source>
        <dbReference type="Araport" id="AT4G36700"/>
    </source>
</evidence>
<evidence type="ECO:0000312" key="6">
    <source>
        <dbReference type="EMBL" id="CAB16827.1"/>
    </source>
</evidence>
<evidence type="ECO:0000312" key="7">
    <source>
        <dbReference type="EMBL" id="CAB80336.1"/>
    </source>
</evidence>
<evidence type="ECO:0000312" key="8">
    <source>
        <dbReference type="Proteomes" id="UP000006548"/>
    </source>
</evidence>
<sequence>MTRFAVLPLSVLLLVLLFLCTESLAKSEESEEYDVAVPSCCGFSSPLLIKKDQWKPIFETKFGQISTVQIGNGCGGMGPYKIHSITLEPNTILLPLLLHSDMVFFVDSGSGILNWVDEEAKSTEIRLGDVYRLRPGSVFYLQSKPVDIFLGTKLKLYAIFSNNDECLHDPCFGAYSSITDLMFGFDETILQSAFGVPEGIIELMRNRTKPPLIVSETLCTPGVANTWQLQPRLLKLFAGSADLVDNKKKKEKKEKKEKVKKAKTFNVFESEPDFESPYGRTITINRKDLKVLKGSMVGVSMVNLTQGSMMGPHWNPWACEISIVLKGAGMVRVLRSSISSNTSSECKNVRFKVEEGDIFAVPRLHPMAQMSFNNDSLVFVGFTTSAKNNEPQFLAGEDSALRMLDRQVLAASLNVSSVTIDGLLGAQKEAVILECHSCAEGEIEKLKVEIERKKIDDERKRRHDERKKEEEEAKREEEERRKREEEEEKKRWPPQQPPQEEELRERQLPMEKEWEMEGEEES</sequence>
<accession>F4JQG6</accession>
<accession>O23211</accession>
<comment type="function">
    <text evidence="4">Seed storage protein.</text>
</comment>
<comment type="similarity">
    <text evidence="4">Belongs to the 7S seed storage protein family.</text>
</comment>
<comment type="sequence caution" evidence="4">
    <conflict type="erroneous gene model prediction">
        <sequence resource="EMBL-CDS" id="CAB16827"/>
    </conflict>
</comment>
<comment type="sequence caution" evidence="4">
    <conflict type="erroneous gene model prediction">
        <sequence resource="EMBL-CDS" id="CAB80336"/>
    </conflict>
</comment>
<feature type="signal peptide" evidence="1">
    <location>
        <begin position="1"/>
        <end position="25"/>
    </location>
</feature>
<feature type="chain" id="PRO_5003309805" description="Vicilin-like seed storage protein At4g36700" evidence="1">
    <location>
        <begin position="26"/>
        <end position="522"/>
    </location>
</feature>
<feature type="domain" description="Cupin type-1" evidence="1">
    <location>
        <begin position="265"/>
        <end position="421"/>
    </location>
</feature>
<feature type="region of interest" description="Disordered" evidence="3">
    <location>
        <begin position="457"/>
        <end position="522"/>
    </location>
</feature>
<feature type="compositionally biased region" description="Basic and acidic residues" evidence="3">
    <location>
        <begin position="466"/>
        <end position="491"/>
    </location>
</feature>
<feature type="compositionally biased region" description="Basic and acidic residues" evidence="3">
    <location>
        <begin position="501"/>
        <end position="515"/>
    </location>
</feature>
<feature type="glycosylation site" description="N-linked (GlcNAc...) asparagine" evidence="2">
    <location>
        <position position="206"/>
    </location>
</feature>
<feature type="glycosylation site" description="N-linked (GlcNAc...) asparagine" evidence="2">
    <location>
        <position position="303"/>
    </location>
</feature>
<feature type="glycosylation site" description="N-linked (GlcNAc...) asparagine" evidence="2">
    <location>
        <position position="341"/>
    </location>
</feature>
<feature type="glycosylation site" description="N-linked (GlcNAc...) asparagine" evidence="2">
    <location>
        <position position="374"/>
    </location>
</feature>
<feature type="glycosylation site" description="N-linked (GlcNAc...) asparagine" evidence="2">
    <location>
        <position position="414"/>
    </location>
</feature>